<feature type="chain" id="PRO_0000070267" description="Macoilin">
    <location>
        <begin position="1"/>
        <end position="664"/>
    </location>
</feature>
<feature type="transmembrane region" description="Helical" evidence="4">
    <location>
        <begin position="28"/>
        <end position="48"/>
    </location>
</feature>
<feature type="transmembrane region" description="Helical" evidence="4">
    <location>
        <begin position="75"/>
        <end position="95"/>
    </location>
</feature>
<feature type="transmembrane region" description="Helical" evidence="4">
    <location>
        <begin position="120"/>
        <end position="140"/>
    </location>
</feature>
<feature type="transmembrane region" description="Helical" evidence="4">
    <location>
        <begin position="154"/>
        <end position="174"/>
    </location>
</feature>
<feature type="region of interest" description="Disordered" evidence="5">
    <location>
        <begin position="253"/>
        <end position="274"/>
    </location>
</feature>
<feature type="region of interest" description="Disordered" evidence="5">
    <location>
        <begin position="320"/>
        <end position="375"/>
    </location>
</feature>
<feature type="region of interest" description="Disordered" evidence="5">
    <location>
        <begin position="630"/>
        <end position="664"/>
    </location>
</feature>
<feature type="compositionally biased region" description="Basic and acidic residues" evidence="5">
    <location>
        <begin position="253"/>
        <end position="265"/>
    </location>
</feature>
<feature type="compositionally biased region" description="Polar residues" evidence="5">
    <location>
        <begin position="320"/>
        <end position="348"/>
    </location>
</feature>
<feature type="modified residue" description="Phosphoserine" evidence="3">
    <location>
        <position position="305"/>
    </location>
</feature>
<feature type="modified residue" description="Phosphoserine" evidence="3">
    <location>
        <position position="332"/>
    </location>
</feature>
<feature type="modified residue" description="Phosphoserine" evidence="3">
    <location>
        <position position="631"/>
    </location>
</feature>
<feature type="modified residue" description="Phosphoserine" evidence="3">
    <location>
        <position position="634"/>
    </location>
</feature>
<feature type="glycosylation site" description="N-linked (GlcNAc...) asparagine" evidence="4">
    <location>
        <position position="324"/>
    </location>
</feature>
<feature type="glycosylation site" description="N-linked (GlcNAc...) asparagine" evidence="4">
    <location>
        <position position="340"/>
    </location>
</feature>
<feature type="glycosylation site" description="N-linked (GlcNAc...) asparagine" evidence="4">
    <location>
        <position position="452"/>
    </location>
</feature>
<feature type="glycosylation site" description="N-linked (GlcNAc...) asparagine" evidence="4">
    <location>
        <position position="655"/>
    </location>
</feature>
<feature type="splice variant" id="VSP_017206" description="In isoform 2." evidence="6">
    <location>
        <begin position="27"/>
        <end position="384"/>
    </location>
</feature>
<name>MACOI_MACMU</name>
<keyword id="KW-0025">Alternative splicing</keyword>
<keyword id="KW-0256">Endoplasmic reticulum</keyword>
<keyword id="KW-0325">Glycoprotein</keyword>
<keyword id="KW-0472">Membrane</keyword>
<keyword id="KW-0539">Nucleus</keyword>
<keyword id="KW-0597">Phosphoprotein</keyword>
<keyword id="KW-1185">Reference proteome</keyword>
<keyword id="KW-0812">Transmembrane</keyword>
<keyword id="KW-1133">Transmembrane helix</keyword>
<accession>Q2TLZ4</accession>
<accession>Q2TLX3</accession>
<comment type="function">
    <text evidence="3">Plays a role in the regulation of neuronal activity.</text>
</comment>
<comment type="subcellular location">
    <subcellularLocation>
        <location evidence="1">Rough endoplasmic reticulum membrane</location>
        <topology evidence="4">Multi-pass membrane protein</topology>
    </subcellularLocation>
    <subcellularLocation>
        <location evidence="1">Nucleus membrane</location>
        <topology evidence="4">Multi-pass membrane protein</topology>
    </subcellularLocation>
    <text evidence="2">Detected in the nucleus membrane of non-neuronal cells and in axonal outgrowths of neuronal cells.</text>
</comment>
<comment type="alternative products">
    <event type="alternative splicing"/>
    <isoform>
        <id>Q2TLZ4-1</id>
        <name>1</name>
        <sequence type="displayed"/>
    </isoform>
    <isoform>
        <id>Q2TLZ4-2</id>
        <name>2</name>
        <sequence type="described" ref="VSP_017206"/>
    </isoform>
</comment>
<comment type="similarity">
    <text evidence="7">Belongs to the macoilin family.</text>
</comment>
<gene>
    <name type="primary">MACO1</name>
    <name type="synonym">TMEM57</name>
</gene>
<evidence type="ECO:0000250" key="1">
    <source>
        <dbReference type="UniProtKB" id="P91193"/>
    </source>
</evidence>
<evidence type="ECO:0000250" key="2">
    <source>
        <dbReference type="UniProtKB" id="Q7TQE6"/>
    </source>
</evidence>
<evidence type="ECO:0000250" key="3">
    <source>
        <dbReference type="UniProtKB" id="Q8N5G2"/>
    </source>
</evidence>
<evidence type="ECO:0000255" key="4"/>
<evidence type="ECO:0000256" key="5">
    <source>
        <dbReference type="SAM" id="MobiDB-lite"/>
    </source>
</evidence>
<evidence type="ECO:0000303" key="6">
    <source ref="1"/>
</evidence>
<evidence type="ECO:0000305" key="7"/>
<organism>
    <name type="scientific">Macaca mulatta</name>
    <name type="common">Rhesus macaque</name>
    <dbReference type="NCBI Taxonomy" id="9544"/>
    <lineage>
        <taxon>Eukaryota</taxon>
        <taxon>Metazoa</taxon>
        <taxon>Chordata</taxon>
        <taxon>Craniata</taxon>
        <taxon>Vertebrata</taxon>
        <taxon>Euteleostomi</taxon>
        <taxon>Mammalia</taxon>
        <taxon>Eutheria</taxon>
        <taxon>Euarchontoglires</taxon>
        <taxon>Primates</taxon>
        <taxon>Haplorrhini</taxon>
        <taxon>Catarrhini</taxon>
        <taxon>Cercopithecidae</taxon>
        <taxon>Cercopithecinae</taxon>
        <taxon>Macaca</taxon>
    </lineage>
</organism>
<reference key="1">
    <citation type="submission" date="2004-12" db="EMBL/GenBank/DDBJ databases">
        <title>Identification of macoilin as a novel membrane-associated coiled-coil tetraspanin protein.</title>
        <authorList>
            <person name="Huang C.-H."/>
            <person name="Chen Y."/>
        </authorList>
    </citation>
    <scope>NUCLEOTIDE SEQUENCE [MRNA] (ISOFORMS 1 AND 2)</scope>
</reference>
<proteinExistence type="evidence at transcript level"/>
<protein>
    <recommendedName>
        <fullName>Macoilin</fullName>
    </recommendedName>
    <alternativeName>
        <fullName>Transmembrane protein 57</fullName>
    </alternativeName>
</protein>
<sequence>MKRRNADCSKLRRPLKRNRITEGIYGSTFLYLKFLVVWALVLLADFVLEFRFEYLWPFWLFIRSVYDSFRYQGLAFSVFFVCVAFTSNIICLLFIPIQWLFFAASTYVWVQYVWHTERGVCLPTVSLWILFVYIEAAIRFKDLKNFHVDLCRPFAAHCIGYPVVTLGFGFKSYVSYKMRLRKQKEVQKENEFYMQLLQQALPPEQQMLQKQEKEAEEAAKGLPDMDSSILIHHNGGIPANKKLSTTLPEIEYREKGKEKDKDAKKHNLGINNNNILQPVDSKIQEIEYMENHINSKRLNNDLVGSTENLLKEDSCTASSKNYKNASGVVNSSPRSHSATNGSIPSSSSKNEKKQKCTSKSPSTHKDLMENCIPNNQLSKPDALVRLEQDIKKLKADLQASRQVEQELRSQISSLSSTERGIRSEMGQLRQENELLQNKLHNAVQMKQKDKHNISQLEKKLKAEQEARSFVEKQLMEEKKRKKLEEATAARAVAFAAASRGECTETLRNRIRELEAEGKKLTMDMKVKEDQIRELELKVQELRKYKENEKDTEVLMSALSAMQDKTQHLENSLSAETRIKLDLFSALGDAKRQLEIAQGQILQKDQEIKELKQKIAEVMAVMPSITYSAATSPLSPVSPHYSSKFVETSPSGLDPNASVYQPLKK</sequence>
<dbReference type="EMBL" id="AY845017">
    <property type="protein sequence ID" value="AAX11915.1"/>
    <property type="molecule type" value="mRNA"/>
</dbReference>
<dbReference type="EMBL" id="AY845038">
    <property type="protein sequence ID" value="AAX11936.1"/>
    <property type="molecule type" value="mRNA"/>
</dbReference>
<dbReference type="RefSeq" id="NP_001033739.1">
    <molecule id="Q2TLZ4-1"/>
    <property type="nucleotide sequence ID" value="NM_001038650.1"/>
</dbReference>
<dbReference type="SMR" id="Q2TLZ4"/>
<dbReference type="STRING" id="9544.ENSMMUP00000023670"/>
<dbReference type="GlyCosmos" id="Q2TLZ4">
    <property type="glycosylation" value="4 sites, No reported glycans"/>
</dbReference>
<dbReference type="PaxDb" id="9544-ENSMMUP00000023670"/>
<dbReference type="GeneID" id="654415"/>
<dbReference type="KEGG" id="mcc:654415"/>
<dbReference type="CTD" id="55219"/>
<dbReference type="eggNOG" id="KOG1821">
    <property type="taxonomic scope" value="Eukaryota"/>
</dbReference>
<dbReference type="InParanoid" id="Q2TLZ4"/>
<dbReference type="OrthoDB" id="10071111at2759"/>
<dbReference type="Proteomes" id="UP000006718">
    <property type="component" value="Unassembled WGS sequence"/>
</dbReference>
<dbReference type="GO" id="GO:0031965">
    <property type="term" value="C:nuclear membrane"/>
    <property type="evidence" value="ECO:0007669"/>
    <property type="project" value="UniProtKB-SubCell"/>
</dbReference>
<dbReference type="GO" id="GO:0030867">
    <property type="term" value="C:rough endoplasmic reticulum membrane"/>
    <property type="evidence" value="ECO:0000250"/>
    <property type="project" value="UniProtKB"/>
</dbReference>
<dbReference type="GO" id="GO:0023041">
    <property type="term" value="P:neuronal signal transduction"/>
    <property type="evidence" value="ECO:0000250"/>
    <property type="project" value="UniProtKB"/>
</dbReference>
<dbReference type="InterPro" id="IPR019130">
    <property type="entry name" value="Macoilin"/>
</dbReference>
<dbReference type="PANTHER" id="PTHR47464">
    <property type="entry name" value="MACOILIN"/>
    <property type="match status" value="1"/>
</dbReference>
<dbReference type="PANTHER" id="PTHR47464:SF2">
    <property type="entry name" value="MACOILIN"/>
    <property type="match status" value="1"/>
</dbReference>
<dbReference type="Pfam" id="PF09726">
    <property type="entry name" value="Macoilin"/>
    <property type="match status" value="1"/>
</dbReference>